<proteinExistence type="inferred from homology"/>
<protein>
    <recommendedName>
        <fullName evidence="1">ATP-dependent RNA helicase RhlB</fullName>
        <ecNumber evidence="1">3.6.4.13</ecNumber>
    </recommendedName>
</protein>
<keyword id="KW-0067">ATP-binding</keyword>
<keyword id="KW-0963">Cytoplasm</keyword>
<keyword id="KW-0347">Helicase</keyword>
<keyword id="KW-0378">Hydrolase</keyword>
<keyword id="KW-0547">Nucleotide-binding</keyword>
<keyword id="KW-0694">RNA-binding</keyword>
<accession>A8A6N4</accession>
<gene>
    <name evidence="1" type="primary">rhlB</name>
    <name type="ordered locus">EcHS_A3996</name>
</gene>
<evidence type="ECO:0000255" key="1">
    <source>
        <dbReference type="HAMAP-Rule" id="MF_00661"/>
    </source>
</evidence>
<evidence type="ECO:0000256" key="2">
    <source>
        <dbReference type="SAM" id="MobiDB-lite"/>
    </source>
</evidence>
<organism>
    <name type="scientific">Escherichia coli O9:H4 (strain HS)</name>
    <dbReference type="NCBI Taxonomy" id="331112"/>
    <lineage>
        <taxon>Bacteria</taxon>
        <taxon>Pseudomonadati</taxon>
        <taxon>Pseudomonadota</taxon>
        <taxon>Gammaproteobacteria</taxon>
        <taxon>Enterobacterales</taxon>
        <taxon>Enterobacteriaceae</taxon>
        <taxon>Escherichia</taxon>
    </lineage>
</organism>
<sequence>MSKTHLTEQKFSDFALHPKVVEALEKKGFHNCTPIQALALPLTLAGRDVAGQAQTGTGKTMAFLTSTFHYLLSHPAIADRKVNQPRALIMAPTRELAVQIHADAEPLAEATGLKLGLAYGGDGYDKQLKVLESGVDILIGTTGRLIDYAKQNHINLGAIQVVVLDEADRMYDLGFIKDIRWLFRRMPPANQRLNMLFSATLSYRVRELAFEQMNNAEYIEVEPEQKTGHRIKEELFYPSNEEKMRLLQTLIEEEWPDRAIIFANTKHRCEEIWGHLAADGHRVGLLTGDVAQKKRLRILDEFTRGDLDILVATDVAARGLHIPAVTHVFNYDLPDDCEDYVHRIGRTGRAGASGHSISLACEEYALNLPAIETYIGHSIPVSKYNPDALMTDLPKPLRLTRPRTGNGPRRTGAPRNRRRSG</sequence>
<reference key="1">
    <citation type="journal article" date="2008" name="J. Bacteriol.">
        <title>The pangenome structure of Escherichia coli: comparative genomic analysis of E. coli commensal and pathogenic isolates.</title>
        <authorList>
            <person name="Rasko D.A."/>
            <person name="Rosovitz M.J."/>
            <person name="Myers G.S.A."/>
            <person name="Mongodin E.F."/>
            <person name="Fricke W.F."/>
            <person name="Gajer P."/>
            <person name="Crabtree J."/>
            <person name="Sebaihia M."/>
            <person name="Thomson N.R."/>
            <person name="Chaudhuri R."/>
            <person name="Henderson I.R."/>
            <person name="Sperandio V."/>
            <person name="Ravel J."/>
        </authorList>
    </citation>
    <scope>NUCLEOTIDE SEQUENCE [LARGE SCALE GENOMIC DNA]</scope>
    <source>
        <strain>HS</strain>
    </source>
</reference>
<feature type="chain" id="PRO_1000082838" description="ATP-dependent RNA helicase RhlB">
    <location>
        <begin position="1"/>
        <end position="421"/>
    </location>
</feature>
<feature type="domain" description="Helicase ATP-binding" evidence="1">
    <location>
        <begin position="40"/>
        <end position="219"/>
    </location>
</feature>
<feature type="domain" description="Helicase C-terminal" evidence="1">
    <location>
        <begin position="245"/>
        <end position="390"/>
    </location>
</feature>
<feature type="region of interest" description="Disordered" evidence="2">
    <location>
        <begin position="392"/>
        <end position="421"/>
    </location>
</feature>
<feature type="short sequence motif" description="Q motif">
    <location>
        <begin position="9"/>
        <end position="37"/>
    </location>
</feature>
<feature type="short sequence motif" description="DEAD box">
    <location>
        <begin position="165"/>
        <end position="168"/>
    </location>
</feature>
<feature type="compositionally biased region" description="Low complexity" evidence="2">
    <location>
        <begin position="402"/>
        <end position="414"/>
    </location>
</feature>
<feature type="binding site" evidence="1">
    <location>
        <begin position="53"/>
        <end position="60"/>
    </location>
    <ligand>
        <name>ATP</name>
        <dbReference type="ChEBI" id="CHEBI:30616"/>
    </ligand>
</feature>
<name>RHLB_ECOHS</name>
<comment type="function">
    <text evidence="1">DEAD-box RNA helicase involved in RNA degradation. Has RNA-dependent ATPase activity and unwinds double-stranded RNA.</text>
</comment>
<comment type="catalytic activity">
    <reaction evidence="1">
        <text>ATP + H2O = ADP + phosphate + H(+)</text>
        <dbReference type="Rhea" id="RHEA:13065"/>
        <dbReference type="ChEBI" id="CHEBI:15377"/>
        <dbReference type="ChEBI" id="CHEBI:15378"/>
        <dbReference type="ChEBI" id="CHEBI:30616"/>
        <dbReference type="ChEBI" id="CHEBI:43474"/>
        <dbReference type="ChEBI" id="CHEBI:456216"/>
        <dbReference type="EC" id="3.6.4.13"/>
    </reaction>
</comment>
<comment type="subunit">
    <text evidence="1">Component of the RNA degradosome, which is a multiprotein complex involved in RNA processing and mRNA degradation.</text>
</comment>
<comment type="subcellular location">
    <subcellularLocation>
        <location evidence="1">Cytoplasm</location>
    </subcellularLocation>
</comment>
<comment type="similarity">
    <text evidence="1">Belongs to the DEAD box helicase family. RhlB subfamily.</text>
</comment>
<dbReference type="EC" id="3.6.4.13" evidence="1"/>
<dbReference type="EMBL" id="CP000802">
    <property type="protein sequence ID" value="ABV08188.1"/>
    <property type="molecule type" value="Genomic_DNA"/>
</dbReference>
<dbReference type="RefSeq" id="WP_000047499.1">
    <property type="nucleotide sequence ID" value="NC_009800.1"/>
</dbReference>
<dbReference type="SMR" id="A8A6N4"/>
<dbReference type="GeneID" id="93778164"/>
<dbReference type="KEGG" id="ecx:EcHS_A3996"/>
<dbReference type="HOGENOM" id="CLU_003041_1_3_6"/>
<dbReference type="GO" id="GO:0005829">
    <property type="term" value="C:cytosol"/>
    <property type="evidence" value="ECO:0007669"/>
    <property type="project" value="TreeGrafter"/>
</dbReference>
<dbReference type="GO" id="GO:0005524">
    <property type="term" value="F:ATP binding"/>
    <property type="evidence" value="ECO:0007669"/>
    <property type="project" value="UniProtKB-UniRule"/>
</dbReference>
<dbReference type="GO" id="GO:0016887">
    <property type="term" value="F:ATP hydrolysis activity"/>
    <property type="evidence" value="ECO:0007669"/>
    <property type="project" value="RHEA"/>
</dbReference>
<dbReference type="GO" id="GO:0003723">
    <property type="term" value="F:RNA binding"/>
    <property type="evidence" value="ECO:0007669"/>
    <property type="project" value="UniProtKB-UniRule"/>
</dbReference>
<dbReference type="GO" id="GO:0003724">
    <property type="term" value="F:RNA helicase activity"/>
    <property type="evidence" value="ECO:0007669"/>
    <property type="project" value="UniProtKB-UniRule"/>
</dbReference>
<dbReference type="GO" id="GO:0006401">
    <property type="term" value="P:RNA catabolic process"/>
    <property type="evidence" value="ECO:0007669"/>
    <property type="project" value="UniProtKB-UniRule"/>
</dbReference>
<dbReference type="CDD" id="cd00268">
    <property type="entry name" value="DEADc"/>
    <property type="match status" value="1"/>
</dbReference>
<dbReference type="CDD" id="cd18787">
    <property type="entry name" value="SF2_C_DEAD"/>
    <property type="match status" value="1"/>
</dbReference>
<dbReference type="FunFam" id="3.40.50.300:FF:000008">
    <property type="entry name" value="ATP-dependent RNA helicase RhlB"/>
    <property type="match status" value="1"/>
</dbReference>
<dbReference type="FunFam" id="3.40.50.300:FF:000312">
    <property type="entry name" value="ATP-dependent RNA helicase RhlB"/>
    <property type="match status" value="1"/>
</dbReference>
<dbReference type="Gene3D" id="3.40.50.300">
    <property type="entry name" value="P-loop containing nucleotide triphosphate hydrolases"/>
    <property type="match status" value="2"/>
</dbReference>
<dbReference type="HAMAP" id="MF_00661">
    <property type="entry name" value="DEAD_helicase_RhlB"/>
    <property type="match status" value="1"/>
</dbReference>
<dbReference type="InterPro" id="IPR011545">
    <property type="entry name" value="DEAD/DEAH_box_helicase_dom"/>
</dbReference>
<dbReference type="InterPro" id="IPR050079">
    <property type="entry name" value="DEAD_box_RNA_helicase"/>
</dbReference>
<dbReference type="InterPro" id="IPR014001">
    <property type="entry name" value="Helicase_ATP-bd"/>
</dbReference>
<dbReference type="InterPro" id="IPR001650">
    <property type="entry name" value="Helicase_C-like"/>
</dbReference>
<dbReference type="InterPro" id="IPR027417">
    <property type="entry name" value="P-loop_NTPase"/>
</dbReference>
<dbReference type="InterPro" id="IPR000629">
    <property type="entry name" value="RNA-helicase_DEAD-box_CS"/>
</dbReference>
<dbReference type="InterPro" id="IPR023554">
    <property type="entry name" value="RNA_helicase_ATP-dep_RhlB"/>
</dbReference>
<dbReference type="InterPro" id="IPR014014">
    <property type="entry name" value="RNA_helicase_DEAD_Q_motif"/>
</dbReference>
<dbReference type="NCBIfam" id="NF003419">
    <property type="entry name" value="PRK04837.1"/>
    <property type="match status" value="1"/>
</dbReference>
<dbReference type="PANTHER" id="PTHR47959:SF10">
    <property type="entry name" value="ATP-DEPENDENT RNA HELICASE RHLB"/>
    <property type="match status" value="1"/>
</dbReference>
<dbReference type="PANTHER" id="PTHR47959">
    <property type="entry name" value="ATP-DEPENDENT RNA HELICASE RHLE-RELATED"/>
    <property type="match status" value="1"/>
</dbReference>
<dbReference type="Pfam" id="PF00270">
    <property type="entry name" value="DEAD"/>
    <property type="match status" value="1"/>
</dbReference>
<dbReference type="Pfam" id="PF00271">
    <property type="entry name" value="Helicase_C"/>
    <property type="match status" value="1"/>
</dbReference>
<dbReference type="SMART" id="SM00487">
    <property type="entry name" value="DEXDc"/>
    <property type="match status" value="1"/>
</dbReference>
<dbReference type="SMART" id="SM00490">
    <property type="entry name" value="HELICc"/>
    <property type="match status" value="1"/>
</dbReference>
<dbReference type="SUPFAM" id="SSF52540">
    <property type="entry name" value="P-loop containing nucleoside triphosphate hydrolases"/>
    <property type="match status" value="1"/>
</dbReference>
<dbReference type="PROSITE" id="PS00039">
    <property type="entry name" value="DEAD_ATP_HELICASE"/>
    <property type="match status" value="1"/>
</dbReference>
<dbReference type="PROSITE" id="PS51192">
    <property type="entry name" value="HELICASE_ATP_BIND_1"/>
    <property type="match status" value="1"/>
</dbReference>
<dbReference type="PROSITE" id="PS51194">
    <property type="entry name" value="HELICASE_CTER"/>
    <property type="match status" value="1"/>
</dbReference>
<dbReference type="PROSITE" id="PS51195">
    <property type="entry name" value="Q_MOTIF"/>
    <property type="match status" value="1"/>
</dbReference>